<protein>
    <recommendedName>
        <fullName evidence="2">Pre-glycoprotein polyprotein GP complex</fullName>
        <shortName evidence="2">Pre-GP-C</shortName>
    </recommendedName>
    <component>
        <recommendedName>
            <fullName evidence="2">Stable signal peptide</fullName>
            <shortName evidence="2">SSP</shortName>
        </recommendedName>
    </component>
    <component>
        <recommendedName>
            <fullName evidence="2">Glycoprotein G1</fullName>
            <shortName evidence="2">GP1</shortName>
        </recommendedName>
    </component>
    <component>
        <recommendedName>
            <fullName evidence="2">Glycoprotein G2</fullName>
            <shortName evidence="2">GP2</shortName>
        </recommendedName>
    </component>
</protein>
<feature type="initiator methionine" description="Removed; by host" evidence="2">
    <location>
        <position position="1"/>
    </location>
</feature>
<feature type="chain" id="PRO_0000361596" description="Pre-glycoprotein polyprotein GP complex" evidence="2">
    <location>
        <begin position="2"/>
        <end position="515"/>
    </location>
</feature>
<feature type="chain" id="PRO_0000361597" description="Stable signal peptide" evidence="2">
    <location>
        <begin position="2"/>
        <end position="58"/>
    </location>
</feature>
<feature type="chain" id="PRO_0000361598" description="Glycoprotein G1" evidence="2">
    <location>
        <begin position="59"/>
        <end position="280"/>
    </location>
</feature>
<feature type="chain" id="PRO_0000361599" description="Glycoprotein G2" evidence="2">
    <location>
        <begin position="281"/>
        <end position="515"/>
    </location>
</feature>
<feature type="topological domain" description="Extracellular" evidence="2">
    <location>
        <begin position="2"/>
        <end position="17"/>
    </location>
</feature>
<feature type="transmembrane region" description="Helical" evidence="2">
    <location>
        <begin position="18"/>
        <end position="33"/>
    </location>
</feature>
<feature type="topological domain" description="Cytoplasmic" evidence="2">
    <location>
        <begin position="34"/>
        <end position="58"/>
    </location>
</feature>
<feature type="topological domain" description="Extracellular" evidence="2">
    <location>
        <begin position="59"/>
        <end position="453"/>
    </location>
</feature>
<feature type="transmembrane region" description="Helical" evidence="2">
    <location>
        <begin position="454"/>
        <end position="474"/>
    </location>
</feature>
<feature type="topological domain" description="Cytoplasmic" evidence="2">
    <location>
        <begin position="475"/>
        <end position="515"/>
    </location>
</feature>
<feature type="binding site" evidence="2">
    <location>
        <position position="57"/>
    </location>
    <ligand>
        <name>Zn(2+)</name>
        <dbReference type="ChEBI" id="CHEBI:29105"/>
        <label>1</label>
    </ligand>
</feature>
<feature type="binding site" evidence="2">
    <location>
        <position position="476"/>
    </location>
    <ligand>
        <name>Zn(2+)</name>
        <dbReference type="ChEBI" id="CHEBI:29105"/>
        <label>2</label>
    </ligand>
</feature>
<feature type="binding site" evidence="2">
    <location>
        <position position="478"/>
    </location>
    <ligand>
        <name>Zn(2+)</name>
        <dbReference type="ChEBI" id="CHEBI:29105"/>
        <label>2</label>
    </ligand>
</feature>
<feature type="binding site" evidence="2">
    <location>
        <position position="484"/>
    </location>
    <ligand>
        <name>Zn(2+)</name>
        <dbReference type="ChEBI" id="CHEBI:29105"/>
        <label>2</label>
    </ligand>
</feature>
<feature type="binding site" evidence="2">
    <location>
        <position position="488"/>
    </location>
    <ligand>
        <name>Zn(2+)</name>
        <dbReference type="ChEBI" id="CHEBI:29105"/>
        <label>1</label>
    </ligand>
</feature>
<feature type="binding site" evidence="2">
    <location>
        <position position="496"/>
    </location>
    <ligand>
        <name>Zn(2+)</name>
        <dbReference type="ChEBI" id="CHEBI:29105"/>
        <label>1</label>
    </ligand>
</feature>
<feature type="binding site" evidence="2">
    <location>
        <position position="498"/>
    </location>
    <ligand>
        <name>Zn(2+)</name>
        <dbReference type="ChEBI" id="CHEBI:29105"/>
        <label>1</label>
    </ligand>
</feature>
<feature type="site" description="Important for GP-C-mediated membrane fusion" evidence="1">
    <location>
        <position position="33"/>
    </location>
</feature>
<feature type="site" description="Cleavage; by host signal peptidase" evidence="2">
    <location>
        <begin position="58"/>
        <end position="59"/>
    </location>
</feature>
<feature type="site" description="Cleavage; by host MBTPS1" evidence="2">
    <location>
        <begin position="280"/>
        <end position="281"/>
    </location>
</feature>
<feature type="lipid moiety-binding region" description="N-myristoyl glycine; by host" evidence="2">
    <location>
        <position position="2"/>
    </location>
</feature>
<feature type="glycosylation site" description="N-linked (GlcNAc...) asparagine; by host" evidence="2">
    <location>
        <position position="90"/>
    </location>
</feature>
<feature type="glycosylation site" description="N-linked (GlcNAc...) asparagine; by host" evidence="2">
    <location>
        <position position="112"/>
    </location>
</feature>
<feature type="glycosylation site" description="N-linked (GlcNAc...) asparagine; by host" evidence="2">
    <location>
        <position position="127"/>
    </location>
</feature>
<feature type="glycosylation site" description="N-linked (GlcNAc...) asparagine; by host" evidence="2">
    <location>
        <position position="180"/>
    </location>
</feature>
<feature type="glycosylation site" description="N-linked (GlcNAc...) asparagine; by host" evidence="2">
    <location>
        <position position="248"/>
    </location>
</feature>
<feature type="glycosylation site" description="N-linked (GlcNAc...) asparagine; by host" evidence="2">
    <location>
        <position position="386"/>
    </location>
</feature>
<feature type="glycosylation site" description="N-linked (GlcNAc...) asparagine; by host" evidence="2">
    <location>
        <position position="394"/>
    </location>
</feature>
<feature type="glycosylation site" description="N-linked (GlcNAc...) asparagine; by host" evidence="2">
    <location>
        <position position="416"/>
    </location>
</feature>
<feature type="disulfide bond" evidence="2">
    <location>
        <begin position="87"/>
        <end position="255"/>
    </location>
</feature>
<feature type="disulfide bond" evidence="2">
    <location>
        <begin position="300"/>
        <end position="313"/>
    </location>
</feature>
<feature type="disulfide bond" evidence="2">
    <location>
        <begin position="322"/>
        <end position="331"/>
    </location>
</feature>
<feature type="disulfide bond" evidence="2">
    <location>
        <begin position="385"/>
        <end position="406"/>
    </location>
</feature>
<feature type="sequence variant">
    <original>P</original>
    <variation>S</variation>
    <location>
        <position position="269"/>
    </location>
</feature>
<dbReference type="EMBL" id="AF485259">
    <property type="protein sequence ID" value="AAN09940.1"/>
    <property type="molecule type" value="Genomic_RNA"/>
</dbReference>
<dbReference type="EMBL" id="AF512830">
    <property type="protein sequence ID" value="AAN32959.1"/>
    <property type="molecule type" value="Genomic_RNA"/>
</dbReference>
<dbReference type="RefSeq" id="YP_001936021.1">
    <property type="nucleotide sequence ID" value="NC_010758.1"/>
</dbReference>
<dbReference type="SMR" id="Q8B121"/>
<dbReference type="GlyCosmos" id="Q8B121">
    <property type="glycosylation" value="13 sites, No reported glycans"/>
</dbReference>
<dbReference type="KEGG" id="vg:6334523"/>
<dbReference type="OrthoDB" id="4838at10239"/>
<dbReference type="Proteomes" id="UP000009262">
    <property type="component" value="Genome"/>
</dbReference>
<dbReference type="GO" id="GO:0044167">
    <property type="term" value="C:host cell endoplasmic reticulum membrane"/>
    <property type="evidence" value="ECO:0007669"/>
    <property type="project" value="UniProtKB-SubCell"/>
</dbReference>
<dbReference type="GO" id="GO:0044178">
    <property type="term" value="C:host cell Golgi membrane"/>
    <property type="evidence" value="ECO:0007669"/>
    <property type="project" value="UniProtKB-SubCell"/>
</dbReference>
<dbReference type="GO" id="GO:0020002">
    <property type="term" value="C:host cell plasma membrane"/>
    <property type="evidence" value="ECO:0007669"/>
    <property type="project" value="UniProtKB-SubCell"/>
</dbReference>
<dbReference type="GO" id="GO:0016020">
    <property type="term" value="C:membrane"/>
    <property type="evidence" value="ECO:0007669"/>
    <property type="project" value="UniProtKB-UniRule"/>
</dbReference>
<dbReference type="GO" id="GO:0019031">
    <property type="term" value="C:viral envelope"/>
    <property type="evidence" value="ECO:0007669"/>
    <property type="project" value="UniProtKB-UniRule"/>
</dbReference>
<dbReference type="GO" id="GO:0055036">
    <property type="term" value="C:virion membrane"/>
    <property type="evidence" value="ECO:0007669"/>
    <property type="project" value="UniProtKB-SubCell"/>
</dbReference>
<dbReference type="GO" id="GO:0046872">
    <property type="term" value="F:metal ion binding"/>
    <property type="evidence" value="ECO:0007669"/>
    <property type="project" value="UniProtKB-KW"/>
</dbReference>
<dbReference type="GO" id="GO:0039654">
    <property type="term" value="P:fusion of virus membrane with host endosome membrane"/>
    <property type="evidence" value="ECO:0007669"/>
    <property type="project" value="UniProtKB-UniRule"/>
</dbReference>
<dbReference type="GO" id="GO:0019065">
    <property type="term" value="P:receptor-mediated endocytosis of virus by host cell"/>
    <property type="evidence" value="ECO:0007669"/>
    <property type="project" value="UniProtKB-UniRule"/>
</dbReference>
<dbReference type="GO" id="GO:0019062">
    <property type="term" value="P:virion attachment to host cell"/>
    <property type="evidence" value="ECO:0007669"/>
    <property type="project" value="UniProtKB-UniRule"/>
</dbReference>
<dbReference type="Gene3D" id="6.10.140.1590">
    <property type="match status" value="1"/>
</dbReference>
<dbReference type="Gene3D" id="2.20.28.180">
    <property type="entry name" value="Arenavirus glycoprotein, zinc binding domain"/>
    <property type="match status" value="1"/>
</dbReference>
<dbReference type="HAMAP" id="MF_04084">
    <property type="entry name" value="ARENA_GPC"/>
    <property type="match status" value="1"/>
</dbReference>
<dbReference type="InterPro" id="IPR001535">
    <property type="entry name" value="Arena_glycoprot"/>
</dbReference>
<dbReference type="InterPro" id="IPR043015">
    <property type="entry name" value="Arena_glycoprot_zinc-bd"/>
</dbReference>
<dbReference type="Pfam" id="PF00798">
    <property type="entry name" value="Arena_glycoprot"/>
    <property type="match status" value="1"/>
</dbReference>
<dbReference type="PIRSF" id="PIRSF004028">
    <property type="entry name" value="GPC_ArenaV"/>
    <property type="match status" value="1"/>
</dbReference>
<accession>Q8B121</accession>
<accession>Q8B116</accession>
<gene>
    <name evidence="2" type="primary">GPC</name>
    <name type="synonym">GP-C</name>
</gene>
<proteinExistence type="evidence at protein level"/>
<comment type="function">
    <molecule>Stable signal peptide</molecule>
    <text evidence="2">Functions as a cleaved signal peptide that is retained as the third component of the GP complex (GP-C). Helps to stabilize the spike complex in its native conformation. The SSP is required for efficient glycoprotein expression, post-translational maturation cleavage of G1 and G2, glycoprotein transport to the cell surface plasma membrane, formation of infectious virus particles, and acid pH-dependent glycoprotein-mediated cell fusion.</text>
</comment>
<comment type="function">
    <molecule>Glycoprotein G1</molecule>
    <text evidence="2 3">Forms the virion spikes together with glycoprotein G2. The glycoprotein spike trimers are connected to the underlying matrix. Mediates virus attachment to host receptor alpha-dystroglycan DAG1. This attachment induces virion internalization predominantly through clathrin- and caveolin-independent endocytosis (PubMed:11967329).</text>
</comment>
<comment type="function">
    <molecule>Glycoprotein G2</molecule>
    <text evidence="2">Forms the virion spikes together with glycoprotein G1. The glycoprotein spike trimers are connected to the underlying matrix. Class I viral fusion protein that directs fusion of viral and host endosomal membranes, leading to delivery of the nucleocapsid into the cytoplasm. Membrane fusion is mediated by irreversible conformational changes induced by acidification.</text>
</comment>
<comment type="subunit">
    <molecule>Stable signal peptide</molecule>
    <text evidence="2">Interacts with glycoprotein G2. Part of the GP complex (GP-C) together with glycoprotein G1 and glycoprotein G2. The GP-complex interacts with protein Z, which interacts with ribonucleocapsid; these interactions may induce virion budding.</text>
</comment>
<comment type="subunit">
    <molecule>Glycoprotein G1</molecule>
    <text evidence="2">Homotrimer; disulfide-linked. In pre-fusion state, G1 homotrimers bind G2 homotrimers via ionic interactions. Part of the GP complex (GP-C) together with glycoprotein G2 and the stable signal peptide. The GP-complex interacts with protein Z, which interacts with ribonucleocapsid; these interactions may induce virion budding.</text>
</comment>
<comment type="subunit">
    <molecule>Glycoprotein G2</molecule>
    <text evidence="2">Homotrimer. Interacts with the stable signal peptide. In pre-fusion state, G2 homotrimers bind G1 homotrimers via ionic interactions. Part of the GP complex (GP-C) together with glycoprotein G1 and the stable signal peptide. Acidification in the endosome triggers rearrangements, which ultimately leads to a 6 helix bundle formed by the two heptad repeat domains (HR1 and HR2) in post-fusion state. The GP-complex interacts with protein Z, which interacts with ribonucleocapsid; these interactions may induce virion budding.</text>
</comment>
<comment type="subcellular location">
    <molecule>Stable signal peptide</molecule>
    <subcellularLocation>
        <location evidence="2">Virion membrane</location>
        <topology evidence="2">Single-pass type II membrane protein</topology>
    </subcellularLocation>
    <subcellularLocation>
        <location evidence="2">Host endoplasmic reticulum membrane</location>
        <topology evidence="2">Single-pass type II membrane protein</topology>
    </subcellularLocation>
    <subcellularLocation>
        <location evidence="2">Host Golgi apparatus membrane</location>
        <topology evidence="2">Single-pass type II membrane protein</topology>
    </subcellularLocation>
    <subcellularLocation>
        <location evidence="2">Host cell membrane</location>
        <topology evidence="2">Single-pass type II membrane protein</topology>
    </subcellularLocation>
</comment>
<comment type="subcellular location">
    <molecule>Glycoprotein G1</molecule>
    <subcellularLocation>
        <location evidence="2">Virion membrane</location>
        <topology evidence="2">Peripheral membrane protein</topology>
    </subcellularLocation>
    <subcellularLocation>
        <location evidence="2">Host endoplasmic reticulum membrane</location>
        <topology evidence="2">Peripheral membrane protein</topology>
    </subcellularLocation>
    <subcellularLocation>
        <location evidence="2">Host Golgi apparatus membrane</location>
        <topology evidence="2">Peripheral membrane protein</topology>
    </subcellularLocation>
    <subcellularLocation>
        <location evidence="2">Host cell membrane</location>
        <topology evidence="2">Peripheral membrane protein</topology>
    </subcellularLocation>
</comment>
<comment type="subcellular location">
    <molecule>Glycoprotein G2</molecule>
    <subcellularLocation>
        <location evidence="2">Virion membrane</location>
        <topology evidence="2">Single-pass membrane protein</topology>
    </subcellularLocation>
    <subcellularLocation>
        <location evidence="2">Host endoplasmic reticulum membrane</location>
        <topology evidence="2">Single-pass membrane protein</topology>
    </subcellularLocation>
    <subcellularLocation>
        <location evidence="2">Host Golgi apparatus membrane</location>
        <topology evidence="2">Single-pass membrane protein</topology>
    </subcellularLocation>
    <subcellularLocation>
        <location evidence="2">Host cell membrane</location>
        <topology evidence="2">Single-pass membrane protein</topology>
    </subcellularLocation>
    <text evidence="2">Binding to the stable signal peptide masks endogenous ER localization signals in the cytoplasmic domain of G2 to ensure that only the fully assembled, tripartite GP complex is transported for virion assembly.</text>
</comment>
<comment type="domain">
    <molecule>Stable signal peptide</molecule>
    <text evidence="2">The N-terminus is localized at the extracellular side of the GP-C, with a part embedded in the membrane probably.</text>
</comment>
<comment type="domain">
    <molecule>Glycoprotein G2</molecule>
    <text evidence="2">Contains 1 fusion peptide at the N-terminus, 2 heptad repeats domains HR1 and HR2 and, at the C-terminus, a cytoplasmic domain that plays a role in ER location. Also contains a zinc-binding domain that allows SSP retention in the GPC complex by accepting a cysteine from SSP as the fourth ligand.</text>
</comment>
<comment type="PTM">
    <molecule>Pre-glycoprotein polyprotein GP complex</molecule>
    <text evidence="2">Specific enzymatic cleavages in vivo yield mature proteins. GP-C polyprotein is cleaved in the endoplasmic reticulum by the host protease MBTPS1. Only cleaved glycoprotein is incorporated into virions.</text>
</comment>
<comment type="PTM">
    <molecule>Stable signal peptide</molecule>
    <text evidence="2">The SSP remains stably associated with the GP complex following cleavage by signal peptidase and plays crucial roles in the trafficking of GP through the secretory pathway.</text>
</comment>
<comment type="PTM">
    <molecule>Stable signal peptide</molecule>
    <text evidence="2">Myristoylation is necessary for GP2-mediated fusion activity.</text>
</comment>
<comment type="similarity">
    <text evidence="2">Belongs to the arenaviridae GPC protein family.</text>
</comment>
<sequence length="515" mass="59232">MGQVIGFFQSLPEIINEALNIALICVALLATIKGMVNIWKSGLIQLLFFLTLAGRSCSHSFTIGRFHEFQSVTVNFTQFMSYAPSSCSVNNTHHYFKGPQNTTWGLELTLTNESMINITNSMRVFTNIHHNVTNCVQNISEHEGVLKWLLETMHLSISKPGKHIAPVMCERQKGLLIEYNLTMTKDHHPNYWNQVLYGLAKLLGSSKRLWFGACNKADCQMQSDHQHIKCNYSNCKGYTSFKYLIIQNTTWENHCEYNHLNTIHLLMSPIGQSFITRRLQAFLTWTLSDALGNDLPGGYCLEQWAVVWFGIKCFDNTAMAKCNQNHDSEFCDMLRLFDYNRNAIQSLNDQSQARLNLLTNTINSLVSDNLLMKNKLRELMNVPYCNYTRFWFINDTKNGRHTLPQCWLVSDGSYLNETRFRTQWLSESNSLYTEMLTEEYEKRQGRTPLSLVDLCFWSTLFYISTLFAHLVGFPTHRHLIGEGCPKPHRLTGSGICSCGHYGIPGKPVRWTKMSR</sequence>
<reference key="1">
    <citation type="journal article" date="2002" name="Virology">
        <title>High genetic divergence and recombination in Arenaviruses from the Americas.</title>
        <authorList>
            <person name="Archer A.M."/>
            <person name="Rico-Hesse R."/>
        </authorList>
    </citation>
    <scope>NUCLEOTIDE SEQUENCE [GENOMIC RNA]</scope>
</reference>
<reference key="2">
    <citation type="journal article" date="2002" name="Biochem. Biophys. Res. Commun.">
        <title>Phylogeny of New World arenaviruses based on the complete coding sequences of the small genomic segment identified an evolutionary lineage produced by intrasegmental recombination.</title>
        <authorList>
            <person name="Charrel R.N."/>
            <person name="Feldmann H."/>
            <person name="Fulhorst C.F."/>
            <person name="Khelifa R."/>
            <person name="de Chesse R."/>
            <person name="de Lamballerie X."/>
        </authorList>
    </citation>
    <scope>NUCLEOTIDE SEQUENCE [GENOMIC RNA]</scope>
</reference>
<reference key="3">
    <citation type="journal article" date="2008" name="Curr. Opin. Microbiol.">
        <title>Phylogeny of the genus Arenavirus.</title>
        <authorList>
            <person name="Charrel R.N."/>
            <person name="de Lamballerie X."/>
            <person name="Emonet S."/>
        </authorList>
    </citation>
    <scope>NUCLEOTIDE SEQUENCE [GENOMIC RNA]</scope>
</reference>
<reference key="4">
    <citation type="journal article" date="2002" name="J. Virol.">
        <title>New World arenavirus clade C, but not clade A and B viruses, utilizes alpha-dystroglycan as its major receptor.</title>
        <authorList>
            <person name="Spiropoulou C.F."/>
            <person name="Kunz S."/>
            <person name="Rollin P.E."/>
            <person name="Campbell K.P."/>
            <person name="Oldstone M.B."/>
        </authorList>
    </citation>
    <scope>FUNCTION</scope>
    <scope>INTERACTION WITH HOST DAG1</scope>
</reference>
<organism>
    <name type="scientific">Latino mammarenavirus (isolate Rat/Bolivia/MARU 1924/1965)</name>
    <name type="common">LATV</name>
    <dbReference type="NCBI Taxonomy" id="3052311"/>
    <lineage>
        <taxon>Viruses</taxon>
        <taxon>Riboviria</taxon>
        <taxon>Orthornavirae</taxon>
        <taxon>Negarnaviricota</taxon>
        <taxon>Polyploviricotina</taxon>
        <taxon>Ellioviricetes</taxon>
        <taxon>Bunyavirales</taxon>
        <taxon>Arenaviridae</taxon>
        <taxon>Mammarenavirus</taxon>
    </lineage>
</organism>
<organismHost>
    <name type="scientific">Calomys callosus</name>
    <name type="common">Large vesper mouse</name>
    <dbReference type="NCBI Taxonomy" id="56210"/>
</organismHost>
<keyword id="KW-1015">Disulfide bond</keyword>
<keyword id="KW-1170">Fusion of virus membrane with host endosomal membrane</keyword>
<keyword id="KW-1168">Fusion of virus membrane with host membrane</keyword>
<keyword id="KW-0325">Glycoprotein</keyword>
<keyword id="KW-1032">Host cell membrane</keyword>
<keyword id="KW-1038">Host endoplasmic reticulum</keyword>
<keyword id="KW-1040">Host Golgi apparatus</keyword>
<keyword id="KW-1043">Host membrane</keyword>
<keyword id="KW-0945">Host-virus interaction</keyword>
<keyword id="KW-0449">Lipoprotein</keyword>
<keyword id="KW-0472">Membrane</keyword>
<keyword id="KW-0479">Metal-binding</keyword>
<keyword id="KW-0519">Myristate</keyword>
<keyword id="KW-1185">Reference proteome</keyword>
<keyword id="KW-0812">Transmembrane</keyword>
<keyword id="KW-1133">Transmembrane helix</keyword>
<keyword id="KW-1161">Viral attachment to host cell</keyword>
<keyword id="KW-0261">Viral envelope protein</keyword>
<keyword id="KW-1162">Viral penetration into host cytoplasm</keyword>
<keyword id="KW-0946">Virion</keyword>
<keyword id="KW-1164">Virus endocytosis by host</keyword>
<keyword id="KW-1160">Virus entry into host cell</keyword>
<keyword id="KW-0862">Zinc</keyword>
<name>GLYC_LATVB</name>
<evidence type="ECO:0000250" key="1">
    <source>
        <dbReference type="UniProtKB" id="P26313"/>
    </source>
</evidence>
<evidence type="ECO:0000255" key="2">
    <source>
        <dbReference type="HAMAP-Rule" id="MF_04084"/>
    </source>
</evidence>
<evidence type="ECO:0000269" key="3">
    <source>
    </source>
</evidence>